<feature type="chain" id="PRO_1000129068" description="Uridine kinase">
    <location>
        <begin position="1"/>
        <end position="212"/>
    </location>
</feature>
<feature type="binding site" evidence="1">
    <location>
        <begin position="13"/>
        <end position="20"/>
    </location>
    <ligand>
        <name>ATP</name>
        <dbReference type="ChEBI" id="CHEBI:30616"/>
    </ligand>
</feature>
<organism>
    <name type="scientific">Bacillus mycoides (strain KBAB4)</name>
    <name type="common">Bacillus weihenstephanensis</name>
    <dbReference type="NCBI Taxonomy" id="315730"/>
    <lineage>
        <taxon>Bacteria</taxon>
        <taxon>Bacillati</taxon>
        <taxon>Bacillota</taxon>
        <taxon>Bacilli</taxon>
        <taxon>Bacillales</taxon>
        <taxon>Bacillaceae</taxon>
        <taxon>Bacillus</taxon>
        <taxon>Bacillus cereus group</taxon>
    </lineage>
</organism>
<accession>A9VI01</accession>
<proteinExistence type="inferred from homology"/>
<reference key="1">
    <citation type="journal article" date="2008" name="Chem. Biol. Interact.">
        <title>Extending the Bacillus cereus group genomics to putative food-borne pathogens of different toxicity.</title>
        <authorList>
            <person name="Lapidus A."/>
            <person name="Goltsman E."/>
            <person name="Auger S."/>
            <person name="Galleron N."/>
            <person name="Segurens B."/>
            <person name="Dossat C."/>
            <person name="Land M.L."/>
            <person name="Broussolle V."/>
            <person name="Brillard J."/>
            <person name="Guinebretiere M.-H."/>
            <person name="Sanchis V."/>
            <person name="Nguen-the C."/>
            <person name="Lereclus D."/>
            <person name="Richardson P."/>
            <person name="Wincker P."/>
            <person name="Weissenbach J."/>
            <person name="Ehrlich S.D."/>
            <person name="Sorokin A."/>
        </authorList>
    </citation>
    <scope>NUCLEOTIDE SEQUENCE [LARGE SCALE GENOMIC DNA]</scope>
    <source>
        <strain>KBAB4</strain>
    </source>
</reference>
<name>URK_BACMK</name>
<gene>
    <name evidence="1" type="primary">udk</name>
    <name type="ordered locus">BcerKBAB4_4227</name>
</gene>
<evidence type="ECO:0000255" key="1">
    <source>
        <dbReference type="HAMAP-Rule" id="MF_00551"/>
    </source>
</evidence>
<dbReference type="EC" id="2.7.1.48" evidence="1"/>
<dbReference type="EMBL" id="CP000903">
    <property type="protein sequence ID" value="ABY45386.1"/>
    <property type="molecule type" value="Genomic_DNA"/>
</dbReference>
<dbReference type="RefSeq" id="WP_002015274.1">
    <property type="nucleotide sequence ID" value="NZ_CAKMRX030000066.1"/>
</dbReference>
<dbReference type="SMR" id="A9VI01"/>
<dbReference type="GeneID" id="66266050"/>
<dbReference type="KEGG" id="bwe:BcerKBAB4_4227"/>
<dbReference type="eggNOG" id="COG0572">
    <property type="taxonomic scope" value="Bacteria"/>
</dbReference>
<dbReference type="HOGENOM" id="CLU_021278_1_2_9"/>
<dbReference type="UniPathway" id="UPA00574">
    <property type="reaction ID" value="UER00637"/>
</dbReference>
<dbReference type="UniPathway" id="UPA00579">
    <property type="reaction ID" value="UER00640"/>
</dbReference>
<dbReference type="Proteomes" id="UP000002154">
    <property type="component" value="Chromosome"/>
</dbReference>
<dbReference type="GO" id="GO:0005737">
    <property type="term" value="C:cytoplasm"/>
    <property type="evidence" value="ECO:0007669"/>
    <property type="project" value="UniProtKB-SubCell"/>
</dbReference>
<dbReference type="GO" id="GO:0005524">
    <property type="term" value="F:ATP binding"/>
    <property type="evidence" value="ECO:0007669"/>
    <property type="project" value="UniProtKB-UniRule"/>
</dbReference>
<dbReference type="GO" id="GO:0043771">
    <property type="term" value="F:cytidine kinase activity"/>
    <property type="evidence" value="ECO:0007669"/>
    <property type="project" value="RHEA"/>
</dbReference>
<dbReference type="GO" id="GO:0004849">
    <property type="term" value="F:uridine kinase activity"/>
    <property type="evidence" value="ECO:0007669"/>
    <property type="project" value="UniProtKB-UniRule"/>
</dbReference>
<dbReference type="GO" id="GO:0044211">
    <property type="term" value="P:CTP salvage"/>
    <property type="evidence" value="ECO:0007669"/>
    <property type="project" value="UniProtKB-UniRule"/>
</dbReference>
<dbReference type="GO" id="GO:0044206">
    <property type="term" value="P:UMP salvage"/>
    <property type="evidence" value="ECO:0007669"/>
    <property type="project" value="UniProtKB-UniRule"/>
</dbReference>
<dbReference type="CDD" id="cd02023">
    <property type="entry name" value="UMPK"/>
    <property type="match status" value="1"/>
</dbReference>
<dbReference type="Gene3D" id="3.40.50.300">
    <property type="entry name" value="P-loop containing nucleotide triphosphate hydrolases"/>
    <property type="match status" value="1"/>
</dbReference>
<dbReference type="HAMAP" id="MF_00551">
    <property type="entry name" value="Uridine_kinase"/>
    <property type="match status" value="1"/>
</dbReference>
<dbReference type="InterPro" id="IPR027417">
    <property type="entry name" value="P-loop_NTPase"/>
</dbReference>
<dbReference type="InterPro" id="IPR006083">
    <property type="entry name" value="PRK/URK"/>
</dbReference>
<dbReference type="InterPro" id="IPR026008">
    <property type="entry name" value="Uridine_kinase"/>
</dbReference>
<dbReference type="InterPro" id="IPR000764">
    <property type="entry name" value="Uridine_kinase-like"/>
</dbReference>
<dbReference type="NCBIfam" id="NF004018">
    <property type="entry name" value="PRK05480.1"/>
    <property type="match status" value="1"/>
</dbReference>
<dbReference type="NCBIfam" id="TIGR00235">
    <property type="entry name" value="udk"/>
    <property type="match status" value="1"/>
</dbReference>
<dbReference type="PANTHER" id="PTHR10285">
    <property type="entry name" value="URIDINE KINASE"/>
    <property type="match status" value="1"/>
</dbReference>
<dbReference type="Pfam" id="PF00485">
    <property type="entry name" value="PRK"/>
    <property type="match status" value="1"/>
</dbReference>
<dbReference type="PRINTS" id="PR00988">
    <property type="entry name" value="URIDINKINASE"/>
</dbReference>
<dbReference type="SUPFAM" id="SSF52540">
    <property type="entry name" value="P-loop containing nucleoside triphosphate hydrolases"/>
    <property type="match status" value="1"/>
</dbReference>
<protein>
    <recommendedName>
        <fullName evidence="1">Uridine kinase</fullName>
        <ecNumber evidence="1">2.7.1.48</ecNumber>
    </recommendedName>
    <alternativeName>
        <fullName evidence="1">Cytidine monophosphokinase</fullName>
    </alternativeName>
    <alternativeName>
        <fullName evidence="1">Uridine monophosphokinase</fullName>
    </alternativeName>
</protein>
<comment type="catalytic activity">
    <reaction evidence="1">
        <text>uridine + ATP = UMP + ADP + H(+)</text>
        <dbReference type="Rhea" id="RHEA:16825"/>
        <dbReference type="ChEBI" id="CHEBI:15378"/>
        <dbReference type="ChEBI" id="CHEBI:16704"/>
        <dbReference type="ChEBI" id="CHEBI:30616"/>
        <dbReference type="ChEBI" id="CHEBI:57865"/>
        <dbReference type="ChEBI" id="CHEBI:456216"/>
        <dbReference type="EC" id="2.7.1.48"/>
    </reaction>
</comment>
<comment type="catalytic activity">
    <reaction evidence="1">
        <text>cytidine + ATP = CMP + ADP + H(+)</text>
        <dbReference type="Rhea" id="RHEA:24674"/>
        <dbReference type="ChEBI" id="CHEBI:15378"/>
        <dbReference type="ChEBI" id="CHEBI:17562"/>
        <dbReference type="ChEBI" id="CHEBI:30616"/>
        <dbReference type="ChEBI" id="CHEBI:60377"/>
        <dbReference type="ChEBI" id="CHEBI:456216"/>
        <dbReference type="EC" id="2.7.1.48"/>
    </reaction>
</comment>
<comment type="pathway">
    <text evidence="1">Pyrimidine metabolism; CTP biosynthesis via salvage pathway; CTP from cytidine: step 1/3.</text>
</comment>
<comment type="pathway">
    <text evidence="1">Pyrimidine metabolism; UMP biosynthesis via salvage pathway; UMP from uridine: step 1/1.</text>
</comment>
<comment type="subcellular location">
    <subcellularLocation>
        <location evidence="1">Cytoplasm</location>
    </subcellularLocation>
</comment>
<comment type="similarity">
    <text evidence="1">Belongs to the uridine kinase family.</text>
</comment>
<sequence>MGTNKPVVIGIAGGSGSGKTSVTKAIFDHFKGHSILILEQDYYYKDQSHLPMEERLKTNYDHPLAFDNDLLIDHLQQLLAYEQVEKPIYDYTLHTRSEKIIPVEPKDVIILEGILILEDPRLCELMDIKVFVDTDADLRILRRMQRDIEERGRTMDSVIDQYVNVVRPMHNQFIEPSKKFADIIIPEGGQNHVAIDIMVTKIATILEQKVNL</sequence>
<keyword id="KW-0067">ATP-binding</keyword>
<keyword id="KW-0963">Cytoplasm</keyword>
<keyword id="KW-0418">Kinase</keyword>
<keyword id="KW-0547">Nucleotide-binding</keyword>
<keyword id="KW-0808">Transferase</keyword>